<accession>A1T1K1</accession>
<sequence>MTAATIPGLDNAPTKHQGLLEWVREVAELTQPDRVAWADGSQEEYDRLCAQLVEAGTFKKLNPEKQPNSYLALSDPSDVARVESRTFICSKREIDAGPTNNWMDPAEMRGILTDLYRGCMRGRTLWVVPFCMGPLDADDPKLGVEITDSEYVVVSMRTMTRMGAAALQKMGDDGFFVKALHSIGAPLEPGQKDVPWPCNDTKYITHFPETREIWSYGSGYGGNALLGKKCYSLRIASAMAHDEGWLAEHMLILKLISPENKAYYIAAAFPSACGKTNLAMLQPTIPGWRAETVGDDIAWMRFGKDGRLYATNPEFGFFGVAPGTNWDSNPNAMKTIAAGNTVFTNVALTDDHDVWWEGLEGEPDHLIDWKGQDWILRETETKAAHPNSRYCTPISQCPTLAPEWDDPQGVPISAILFGGRRKTTVPLITEARDWQHGVFIGATLGSEQTAAAEGKVGTVRRDPMAMLPFLGYNVGDYFQHWINIGKQADESQLPKVFFVNWFRRGDDGRFLWPGFGENSRVLKWAIERIEHKADGKSTPIGIVPTAADLDLEGLDVDPADVDEALAVNADEWRAEVPLIEEWFEFVGEKLPTGIKDEFDALKTRLAEDS</sequence>
<reference key="1">
    <citation type="submission" date="2006-12" db="EMBL/GenBank/DDBJ databases">
        <title>Complete sequence of Mycobacterium vanbaalenii PYR-1.</title>
        <authorList>
            <consortium name="US DOE Joint Genome Institute"/>
            <person name="Copeland A."/>
            <person name="Lucas S."/>
            <person name="Lapidus A."/>
            <person name="Barry K."/>
            <person name="Detter J.C."/>
            <person name="Glavina del Rio T."/>
            <person name="Hammon N."/>
            <person name="Israni S."/>
            <person name="Dalin E."/>
            <person name="Tice H."/>
            <person name="Pitluck S."/>
            <person name="Singan V."/>
            <person name="Schmutz J."/>
            <person name="Larimer F."/>
            <person name="Land M."/>
            <person name="Hauser L."/>
            <person name="Kyrpides N."/>
            <person name="Anderson I.J."/>
            <person name="Miller C."/>
            <person name="Richardson P."/>
        </authorList>
    </citation>
    <scope>NUCLEOTIDE SEQUENCE [LARGE SCALE GENOMIC DNA]</scope>
    <source>
        <strain>DSM 7251 / JCM 13017 / BCRC 16820 / KCTC 9966 / NRRL B-24157 / PYR-1</strain>
    </source>
</reference>
<protein>
    <recommendedName>
        <fullName evidence="1">Phosphoenolpyruvate carboxykinase [GTP]</fullName>
        <shortName evidence="1">PEP carboxykinase</shortName>
        <shortName evidence="1">PEPCK</shortName>
        <ecNumber evidence="1">4.1.1.32</ecNumber>
    </recommendedName>
</protein>
<gene>
    <name evidence="1" type="primary">pckG</name>
    <name type="ordered locus">Mvan_0201</name>
</gene>
<evidence type="ECO:0000255" key="1">
    <source>
        <dbReference type="HAMAP-Rule" id="MF_00452"/>
    </source>
</evidence>
<comment type="function">
    <text evidence="1">Catalyzes the conversion of oxaloacetate (OAA) to phosphoenolpyruvate (PEP), the rate-limiting step in the metabolic pathway that produces glucose from lactate and other precursors derived from the citric acid cycle.</text>
</comment>
<comment type="catalytic activity">
    <reaction evidence="1">
        <text>oxaloacetate + GTP = phosphoenolpyruvate + GDP + CO2</text>
        <dbReference type="Rhea" id="RHEA:10388"/>
        <dbReference type="ChEBI" id="CHEBI:16452"/>
        <dbReference type="ChEBI" id="CHEBI:16526"/>
        <dbReference type="ChEBI" id="CHEBI:37565"/>
        <dbReference type="ChEBI" id="CHEBI:58189"/>
        <dbReference type="ChEBI" id="CHEBI:58702"/>
        <dbReference type="EC" id="4.1.1.32"/>
    </reaction>
</comment>
<comment type="cofactor">
    <cofactor evidence="1">
        <name>Mn(2+)</name>
        <dbReference type="ChEBI" id="CHEBI:29035"/>
    </cofactor>
    <text evidence="1">Binds 1 Mn(2+) ion per subunit.</text>
</comment>
<comment type="pathway">
    <text evidence="1">Carbohydrate biosynthesis; gluconeogenesis.</text>
</comment>
<comment type="subunit">
    <text evidence="1">Monomer.</text>
</comment>
<comment type="subcellular location">
    <subcellularLocation>
        <location evidence="1">Cytoplasm</location>
    </subcellularLocation>
</comment>
<comment type="similarity">
    <text evidence="1">Belongs to the phosphoenolpyruvate carboxykinase [GTP] family.</text>
</comment>
<dbReference type="EC" id="4.1.1.32" evidence="1"/>
<dbReference type="EMBL" id="CP000511">
    <property type="protein sequence ID" value="ABM11051.1"/>
    <property type="molecule type" value="Genomic_DNA"/>
</dbReference>
<dbReference type="RefSeq" id="WP_011777525.1">
    <property type="nucleotide sequence ID" value="NZ_JACKSD010000314.1"/>
</dbReference>
<dbReference type="SMR" id="A1T1K1"/>
<dbReference type="STRING" id="350058.Mvan_0201"/>
<dbReference type="KEGG" id="mva:Mvan_0201"/>
<dbReference type="eggNOG" id="COG1274">
    <property type="taxonomic scope" value="Bacteria"/>
</dbReference>
<dbReference type="HOGENOM" id="CLU_028872_1_1_11"/>
<dbReference type="UniPathway" id="UPA00138"/>
<dbReference type="Proteomes" id="UP000009159">
    <property type="component" value="Chromosome"/>
</dbReference>
<dbReference type="GO" id="GO:0005829">
    <property type="term" value="C:cytosol"/>
    <property type="evidence" value="ECO:0007669"/>
    <property type="project" value="TreeGrafter"/>
</dbReference>
<dbReference type="GO" id="GO:0005525">
    <property type="term" value="F:GTP binding"/>
    <property type="evidence" value="ECO:0007669"/>
    <property type="project" value="UniProtKB-UniRule"/>
</dbReference>
<dbReference type="GO" id="GO:0030145">
    <property type="term" value="F:manganese ion binding"/>
    <property type="evidence" value="ECO:0007669"/>
    <property type="project" value="UniProtKB-UniRule"/>
</dbReference>
<dbReference type="GO" id="GO:0004613">
    <property type="term" value="F:phosphoenolpyruvate carboxykinase (GTP) activity"/>
    <property type="evidence" value="ECO:0007669"/>
    <property type="project" value="UniProtKB-UniRule"/>
</dbReference>
<dbReference type="GO" id="GO:0071333">
    <property type="term" value="P:cellular response to glucose stimulus"/>
    <property type="evidence" value="ECO:0007669"/>
    <property type="project" value="TreeGrafter"/>
</dbReference>
<dbReference type="GO" id="GO:0006094">
    <property type="term" value="P:gluconeogenesis"/>
    <property type="evidence" value="ECO:0007669"/>
    <property type="project" value="UniProtKB-UniRule"/>
</dbReference>
<dbReference type="GO" id="GO:0046327">
    <property type="term" value="P:glycerol biosynthetic process from pyruvate"/>
    <property type="evidence" value="ECO:0007669"/>
    <property type="project" value="TreeGrafter"/>
</dbReference>
<dbReference type="GO" id="GO:0006107">
    <property type="term" value="P:oxaloacetate metabolic process"/>
    <property type="evidence" value="ECO:0007669"/>
    <property type="project" value="TreeGrafter"/>
</dbReference>
<dbReference type="GO" id="GO:0019543">
    <property type="term" value="P:propionate catabolic process"/>
    <property type="evidence" value="ECO:0007669"/>
    <property type="project" value="TreeGrafter"/>
</dbReference>
<dbReference type="GO" id="GO:0033993">
    <property type="term" value="P:response to lipid"/>
    <property type="evidence" value="ECO:0007669"/>
    <property type="project" value="TreeGrafter"/>
</dbReference>
<dbReference type="GO" id="GO:0042594">
    <property type="term" value="P:response to starvation"/>
    <property type="evidence" value="ECO:0007669"/>
    <property type="project" value="TreeGrafter"/>
</dbReference>
<dbReference type="CDD" id="cd00819">
    <property type="entry name" value="PEPCK_GTP"/>
    <property type="match status" value="1"/>
</dbReference>
<dbReference type="FunFam" id="3.40.449.10:FF:000005">
    <property type="entry name" value="Phosphoenolpyruvate carboxykinase [GTP]"/>
    <property type="match status" value="1"/>
</dbReference>
<dbReference type="Gene3D" id="3.90.228.20">
    <property type="match status" value="1"/>
</dbReference>
<dbReference type="Gene3D" id="3.40.449.10">
    <property type="entry name" value="Phosphoenolpyruvate Carboxykinase, domain 1"/>
    <property type="match status" value="1"/>
</dbReference>
<dbReference type="Gene3D" id="2.170.8.10">
    <property type="entry name" value="Phosphoenolpyruvate Carboxykinase, domain 2"/>
    <property type="match status" value="1"/>
</dbReference>
<dbReference type="HAMAP" id="MF_00452">
    <property type="entry name" value="PEPCK_GTP"/>
    <property type="match status" value="1"/>
</dbReference>
<dbReference type="InterPro" id="IPR018091">
    <property type="entry name" value="PEP_carboxykin_GTP_CS"/>
</dbReference>
<dbReference type="InterPro" id="IPR013035">
    <property type="entry name" value="PEP_carboxykinase_C"/>
</dbReference>
<dbReference type="InterPro" id="IPR008209">
    <property type="entry name" value="PEP_carboxykinase_GTP"/>
</dbReference>
<dbReference type="InterPro" id="IPR035077">
    <property type="entry name" value="PEP_carboxykinase_GTP_C"/>
</dbReference>
<dbReference type="InterPro" id="IPR035078">
    <property type="entry name" value="PEP_carboxykinase_GTP_N"/>
</dbReference>
<dbReference type="InterPro" id="IPR008210">
    <property type="entry name" value="PEP_carboxykinase_N"/>
</dbReference>
<dbReference type="NCBIfam" id="NF003253">
    <property type="entry name" value="PRK04210.1"/>
    <property type="match status" value="1"/>
</dbReference>
<dbReference type="PANTHER" id="PTHR11561">
    <property type="entry name" value="PHOSPHOENOLPYRUVATE CARBOXYKINASE"/>
    <property type="match status" value="1"/>
</dbReference>
<dbReference type="PANTHER" id="PTHR11561:SF0">
    <property type="entry name" value="PHOSPHOENOLPYRUVATE CARBOXYKINASE [GTP]-RELATED"/>
    <property type="match status" value="1"/>
</dbReference>
<dbReference type="Pfam" id="PF00821">
    <property type="entry name" value="PEPCK_GTP"/>
    <property type="match status" value="1"/>
</dbReference>
<dbReference type="Pfam" id="PF17297">
    <property type="entry name" value="PEPCK_N"/>
    <property type="match status" value="1"/>
</dbReference>
<dbReference type="PIRSF" id="PIRSF001348">
    <property type="entry name" value="PEP_carboxykinase_GTP"/>
    <property type="match status" value="1"/>
</dbReference>
<dbReference type="SUPFAM" id="SSF68923">
    <property type="entry name" value="PEP carboxykinase N-terminal domain"/>
    <property type="match status" value="1"/>
</dbReference>
<dbReference type="SUPFAM" id="SSF53795">
    <property type="entry name" value="PEP carboxykinase-like"/>
    <property type="match status" value="1"/>
</dbReference>
<dbReference type="PROSITE" id="PS00505">
    <property type="entry name" value="PEPCK_GTP"/>
    <property type="match status" value="1"/>
</dbReference>
<feature type="chain" id="PRO_1000060298" description="Phosphoenolpyruvate carboxykinase [GTP]">
    <location>
        <begin position="1"/>
        <end position="609"/>
    </location>
</feature>
<feature type="active site" evidence="1">
    <location>
        <position position="273"/>
    </location>
</feature>
<feature type="binding site" evidence="1">
    <location>
        <position position="81"/>
    </location>
    <ligand>
        <name>substrate</name>
    </ligand>
</feature>
<feature type="binding site" evidence="1">
    <location>
        <begin position="220"/>
        <end position="222"/>
    </location>
    <ligand>
        <name>substrate</name>
    </ligand>
</feature>
<feature type="binding site" evidence="1">
    <location>
        <position position="229"/>
    </location>
    <ligand>
        <name>Mn(2+)</name>
        <dbReference type="ChEBI" id="CHEBI:29035"/>
    </ligand>
</feature>
<feature type="binding site" evidence="1">
    <location>
        <position position="249"/>
    </location>
    <ligand>
        <name>Mn(2+)</name>
        <dbReference type="ChEBI" id="CHEBI:29035"/>
    </ligand>
</feature>
<feature type="binding site" evidence="1">
    <location>
        <position position="271"/>
    </location>
    <ligand>
        <name>substrate</name>
    </ligand>
</feature>
<feature type="binding site" evidence="1">
    <location>
        <begin position="272"/>
        <end position="277"/>
    </location>
    <ligand>
        <name>GTP</name>
        <dbReference type="ChEBI" id="CHEBI:37565"/>
    </ligand>
</feature>
<feature type="binding site" evidence="1">
    <location>
        <position position="296"/>
    </location>
    <ligand>
        <name>Mn(2+)</name>
        <dbReference type="ChEBI" id="CHEBI:29035"/>
    </ligand>
</feature>
<feature type="binding site" evidence="1">
    <location>
        <begin position="387"/>
        <end position="389"/>
    </location>
    <ligand>
        <name>substrate</name>
    </ligand>
</feature>
<feature type="binding site" evidence="1">
    <location>
        <position position="389"/>
    </location>
    <ligand>
        <name>GTP</name>
        <dbReference type="ChEBI" id="CHEBI:37565"/>
    </ligand>
</feature>
<feature type="binding site" evidence="1">
    <location>
        <position position="420"/>
    </location>
    <ligand>
        <name>GTP</name>
        <dbReference type="ChEBI" id="CHEBI:37565"/>
    </ligand>
</feature>
<feature type="binding site" evidence="1">
    <location>
        <begin position="515"/>
        <end position="518"/>
    </location>
    <ligand>
        <name>GTP</name>
        <dbReference type="ChEBI" id="CHEBI:37565"/>
    </ligand>
</feature>
<keyword id="KW-0963">Cytoplasm</keyword>
<keyword id="KW-0210">Decarboxylase</keyword>
<keyword id="KW-0312">Gluconeogenesis</keyword>
<keyword id="KW-0342">GTP-binding</keyword>
<keyword id="KW-0456">Lyase</keyword>
<keyword id="KW-0464">Manganese</keyword>
<keyword id="KW-0479">Metal-binding</keyword>
<keyword id="KW-0547">Nucleotide-binding</keyword>
<organism>
    <name type="scientific">Mycolicibacterium vanbaalenii (strain DSM 7251 / JCM 13017 / BCRC 16820 / KCTC 9966 / NRRL B-24157 / PYR-1)</name>
    <name type="common">Mycobacterium vanbaalenii</name>
    <dbReference type="NCBI Taxonomy" id="350058"/>
    <lineage>
        <taxon>Bacteria</taxon>
        <taxon>Bacillati</taxon>
        <taxon>Actinomycetota</taxon>
        <taxon>Actinomycetes</taxon>
        <taxon>Mycobacteriales</taxon>
        <taxon>Mycobacteriaceae</taxon>
        <taxon>Mycolicibacterium</taxon>
    </lineage>
</organism>
<name>PCKG_MYCVP</name>
<proteinExistence type="inferred from homology"/>